<proteinExistence type="inferred from homology"/>
<accession>B2VDY7</accession>
<keyword id="KW-0997">Cell inner membrane</keyword>
<keyword id="KW-1003">Cell membrane</keyword>
<keyword id="KW-0406">Ion transport</keyword>
<keyword id="KW-0472">Membrane</keyword>
<keyword id="KW-1185">Reference proteome</keyword>
<keyword id="KW-0769">Symport</keyword>
<keyword id="KW-0812">Transmembrane</keyword>
<keyword id="KW-1133">Transmembrane helix</keyword>
<keyword id="KW-0813">Transport</keyword>
<organism>
    <name type="scientific">Erwinia tasmaniensis (strain DSM 17950 / CFBP 7177 / CIP 109463 / NCPPB 4357 / Et1/99)</name>
    <dbReference type="NCBI Taxonomy" id="465817"/>
    <lineage>
        <taxon>Bacteria</taxon>
        <taxon>Pseudomonadati</taxon>
        <taxon>Pseudomonadota</taxon>
        <taxon>Gammaproteobacteria</taxon>
        <taxon>Enterobacterales</taxon>
        <taxon>Erwiniaceae</taxon>
        <taxon>Erwinia</taxon>
    </lineage>
</organism>
<dbReference type="EMBL" id="CU468135">
    <property type="protein sequence ID" value="CAO96157.1"/>
    <property type="molecule type" value="Genomic_DNA"/>
</dbReference>
<dbReference type="RefSeq" id="WP_012440857.1">
    <property type="nucleotide sequence ID" value="NC_010694.1"/>
</dbReference>
<dbReference type="SMR" id="B2VDY7"/>
<dbReference type="STRING" id="465817.ETA_11110"/>
<dbReference type="KEGG" id="eta:ETA_11110"/>
<dbReference type="eggNOG" id="COG1914">
    <property type="taxonomic scope" value="Bacteria"/>
</dbReference>
<dbReference type="HOGENOM" id="CLU_020088_2_0_6"/>
<dbReference type="OrthoDB" id="9787548at2"/>
<dbReference type="Proteomes" id="UP000001726">
    <property type="component" value="Chromosome"/>
</dbReference>
<dbReference type="GO" id="GO:0005886">
    <property type="term" value="C:plasma membrane"/>
    <property type="evidence" value="ECO:0007669"/>
    <property type="project" value="UniProtKB-SubCell"/>
</dbReference>
<dbReference type="GO" id="GO:0015086">
    <property type="term" value="F:cadmium ion transmembrane transporter activity"/>
    <property type="evidence" value="ECO:0007669"/>
    <property type="project" value="TreeGrafter"/>
</dbReference>
<dbReference type="GO" id="GO:0005384">
    <property type="term" value="F:manganese ion transmembrane transporter activity"/>
    <property type="evidence" value="ECO:0007669"/>
    <property type="project" value="TreeGrafter"/>
</dbReference>
<dbReference type="GO" id="GO:0046872">
    <property type="term" value="F:metal ion binding"/>
    <property type="evidence" value="ECO:0007669"/>
    <property type="project" value="UniProtKB-UniRule"/>
</dbReference>
<dbReference type="GO" id="GO:0015293">
    <property type="term" value="F:symporter activity"/>
    <property type="evidence" value="ECO:0007669"/>
    <property type="project" value="UniProtKB-UniRule"/>
</dbReference>
<dbReference type="GO" id="GO:0034755">
    <property type="term" value="P:iron ion transmembrane transport"/>
    <property type="evidence" value="ECO:0007669"/>
    <property type="project" value="TreeGrafter"/>
</dbReference>
<dbReference type="HAMAP" id="MF_00221">
    <property type="entry name" value="NRAMP"/>
    <property type="match status" value="1"/>
</dbReference>
<dbReference type="InterPro" id="IPR001046">
    <property type="entry name" value="NRAMP_fam"/>
</dbReference>
<dbReference type="NCBIfam" id="TIGR01197">
    <property type="entry name" value="nramp"/>
    <property type="match status" value="1"/>
</dbReference>
<dbReference type="NCBIfam" id="NF037982">
    <property type="entry name" value="Nramp_1"/>
    <property type="match status" value="1"/>
</dbReference>
<dbReference type="NCBIfam" id="NF001923">
    <property type="entry name" value="PRK00701.1"/>
    <property type="match status" value="1"/>
</dbReference>
<dbReference type="PANTHER" id="PTHR11706:SF33">
    <property type="entry name" value="NATURAL RESISTANCE-ASSOCIATED MACROPHAGE PROTEIN 2"/>
    <property type="match status" value="1"/>
</dbReference>
<dbReference type="PANTHER" id="PTHR11706">
    <property type="entry name" value="SOLUTE CARRIER PROTEIN FAMILY 11 MEMBER"/>
    <property type="match status" value="1"/>
</dbReference>
<dbReference type="Pfam" id="PF01566">
    <property type="entry name" value="Nramp"/>
    <property type="match status" value="1"/>
</dbReference>
<dbReference type="PRINTS" id="PR00447">
    <property type="entry name" value="NATRESASSCMP"/>
</dbReference>
<gene>
    <name evidence="1" type="primary">mntH</name>
    <name type="ordered locus">ETA_11110</name>
</gene>
<sequence length="413" mass="44156">MSESRTVERSVRSNRKIKFALMGPAFIAAIGYIDPGNFATNIQAGASYGYQLLWVVVWANVMAMVIQLMSAKLGIATGKNLAEHIRDRFPRPAVWFYWVQAEIIAMATDLAEFIGAAIGFKLVFGVTLLQGAMLTGVATFLILMLQNRGQKPLELVIGGLLLFVAAAYVIELFFSQPKVVDLLQGMAVPSLPTADAVLLAAGVLGATIMPHVIYLHSSLTQNSGDQGSRSERYSSTKLDVAIAMTIAGFVNLAMMATAAATFHFSGHSGVADLDQAYLTLDPLLGKAAALVFGLSLLAAGLSSTVVGTMAGQVVMQGFIHFHIPLLLRRVITMLPSFIVILAGWEPTRILVMSQVLLSFGIALALIPLLAFTGNPGLMGDMVNSRLMQNFGRLIVVVVIALNGYLLVAMALNL</sequence>
<name>MNTH_ERWT9</name>
<feature type="chain" id="PRO_1000100085" description="Divalent metal cation transporter MntH">
    <location>
        <begin position="1"/>
        <end position="413"/>
    </location>
</feature>
<feature type="transmembrane region" description="Helical" evidence="1">
    <location>
        <begin position="19"/>
        <end position="39"/>
    </location>
</feature>
<feature type="transmembrane region" description="Helical" evidence="1">
    <location>
        <begin position="49"/>
        <end position="69"/>
    </location>
</feature>
<feature type="transmembrane region" description="Helical" evidence="1">
    <location>
        <begin position="94"/>
        <end position="114"/>
    </location>
</feature>
<feature type="transmembrane region" description="Helical" evidence="1">
    <location>
        <begin position="122"/>
        <end position="142"/>
    </location>
</feature>
<feature type="transmembrane region" description="Helical" evidence="1">
    <location>
        <begin position="155"/>
        <end position="175"/>
    </location>
</feature>
<feature type="transmembrane region" description="Helical" evidence="1">
    <location>
        <begin position="196"/>
        <end position="216"/>
    </location>
</feature>
<feature type="transmembrane region" description="Helical" evidence="1">
    <location>
        <begin position="240"/>
        <end position="260"/>
    </location>
</feature>
<feature type="transmembrane region" description="Helical" evidence="1">
    <location>
        <begin position="287"/>
        <end position="307"/>
    </location>
</feature>
<feature type="transmembrane region" description="Helical" evidence="1">
    <location>
        <begin position="323"/>
        <end position="343"/>
    </location>
</feature>
<feature type="transmembrane region" description="Helical" evidence="1">
    <location>
        <begin position="349"/>
        <end position="369"/>
    </location>
</feature>
<feature type="transmembrane region" description="Helical" evidence="1">
    <location>
        <begin position="393"/>
        <end position="413"/>
    </location>
</feature>
<evidence type="ECO:0000255" key="1">
    <source>
        <dbReference type="HAMAP-Rule" id="MF_00221"/>
    </source>
</evidence>
<reference key="1">
    <citation type="journal article" date="2008" name="Environ. Microbiol.">
        <title>The genome of Erwinia tasmaniensis strain Et1/99, a non-pathogenic bacterium in the genus Erwinia.</title>
        <authorList>
            <person name="Kube M."/>
            <person name="Migdoll A.M."/>
            <person name="Mueller I."/>
            <person name="Kuhl H."/>
            <person name="Beck A."/>
            <person name="Reinhardt R."/>
            <person name="Geider K."/>
        </authorList>
    </citation>
    <scope>NUCLEOTIDE SEQUENCE [LARGE SCALE GENOMIC DNA]</scope>
    <source>
        <strain>DSM 17950 / CFBP 7177 / CIP 109463 / NCPPB 4357 / Et1/99</strain>
    </source>
</reference>
<protein>
    <recommendedName>
        <fullName evidence="1">Divalent metal cation transporter MntH</fullName>
    </recommendedName>
</protein>
<comment type="function">
    <text evidence="1">H(+)-stimulated, divalent metal cation uptake system.</text>
</comment>
<comment type="subcellular location">
    <subcellularLocation>
        <location evidence="1">Cell inner membrane</location>
        <topology evidence="1">Multi-pass membrane protein</topology>
    </subcellularLocation>
</comment>
<comment type="similarity">
    <text evidence="1">Belongs to the NRAMP family.</text>
</comment>